<sequence length="75" mass="8801">MNDNNDNNNNNKNIDNVDDDNDDNDKGKYKGNEFSILEKSLNKLLNNVETFKNYNNQMIESNNKTVDFVHSRFNK</sequence>
<accession>Q55GS1</accession>
<evidence type="ECO:0000256" key="1">
    <source>
        <dbReference type="SAM" id="MobiDB-lite"/>
    </source>
</evidence>
<proteinExistence type="predicted"/>
<name>Y9358_DICDI</name>
<reference key="1">
    <citation type="journal article" date="2005" name="Nature">
        <title>The genome of the social amoeba Dictyostelium discoideum.</title>
        <authorList>
            <person name="Eichinger L."/>
            <person name="Pachebat J.A."/>
            <person name="Gloeckner G."/>
            <person name="Rajandream M.A."/>
            <person name="Sucgang R."/>
            <person name="Berriman M."/>
            <person name="Song J."/>
            <person name="Olsen R."/>
            <person name="Szafranski K."/>
            <person name="Xu Q."/>
            <person name="Tunggal B."/>
            <person name="Kummerfeld S."/>
            <person name="Madera M."/>
            <person name="Konfortov B.A."/>
            <person name="Rivero F."/>
            <person name="Bankier A.T."/>
            <person name="Lehmann R."/>
            <person name="Hamlin N."/>
            <person name="Davies R."/>
            <person name="Gaudet P."/>
            <person name="Fey P."/>
            <person name="Pilcher K."/>
            <person name="Chen G."/>
            <person name="Saunders D."/>
            <person name="Sodergren E.J."/>
            <person name="Davis P."/>
            <person name="Kerhornou A."/>
            <person name="Nie X."/>
            <person name="Hall N."/>
            <person name="Anjard C."/>
            <person name="Hemphill L."/>
            <person name="Bason N."/>
            <person name="Farbrother P."/>
            <person name="Desany B."/>
            <person name="Just E."/>
            <person name="Morio T."/>
            <person name="Rost R."/>
            <person name="Churcher C.M."/>
            <person name="Cooper J."/>
            <person name="Haydock S."/>
            <person name="van Driessche N."/>
            <person name="Cronin A."/>
            <person name="Goodhead I."/>
            <person name="Muzny D.M."/>
            <person name="Mourier T."/>
            <person name="Pain A."/>
            <person name="Lu M."/>
            <person name="Harper D."/>
            <person name="Lindsay R."/>
            <person name="Hauser H."/>
            <person name="James K.D."/>
            <person name="Quiles M."/>
            <person name="Madan Babu M."/>
            <person name="Saito T."/>
            <person name="Buchrieser C."/>
            <person name="Wardroper A."/>
            <person name="Felder M."/>
            <person name="Thangavelu M."/>
            <person name="Johnson D."/>
            <person name="Knights A."/>
            <person name="Loulseged H."/>
            <person name="Mungall K.L."/>
            <person name="Oliver K."/>
            <person name="Price C."/>
            <person name="Quail M.A."/>
            <person name="Urushihara H."/>
            <person name="Hernandez J."/>
            <person name="Rabbinowitsch E."/>
            <person name="Steffen D."/>
            <person name="Sanders M."/>
            <person name="Ma J."/>
            <person name="Kohara Y."/>
            <person name="Sharp S."/>
            <person name="Simmonds M.N."/>
            <person name="Spiegler S."/>
            <person name="Tivey A."/>
            <person name="Sugano S."/>
            <person name="White B."/>
            <person name="Walker D."/>
            <person name="Woodward J.R."/>
            <person name="Winckler T."/>
            <person name="Tanaka Y."/>
            <person name="Shaulsky G."/>
            <person name="Schleicher M."/>
            <person name="Weinstock G.M."/>
            <person name="Rosenthal A."/>
            <person name="Cox E.C."/>
            <person name="Chisholm R.L."/>
            <person name="Gibbs R.A."/>
            <person name="Loomis W.F."/>
            <person name="Platzer M."/>
            <person name="Kay R.R."/>
            <person name="Williams J.G."/>
            <person name="Dear P.H."/>
            <person name="Noegel A.A."/>
            <person name="Barrell B.G."/>
            <person name="Kuspa A."/>
        </authorList>
    </citation>
    <scope>NUCLEOTIDE SEQUENCE [LARGE SCALE GENOMIC DNA]</scope>
    <source>
        <strain>AX4</strain>
    </source>
</reference>
<gene>
    <name type="ORF">DDB_G0267542</name>
</gene>
<organism>
    <name type="scientific">Dictyostelium discoideum</name>
    <name type="common">Social amoeba</name>
    <dbReference type="NCBI Taxonomy" id="44689"/>
    <lineage>
        <taxon>Eukaryota</taxon>
        <taxon>Amoebozoa</taxon>
        <taxon>Evosea</taxon>
        <taxon>Eumycetozoa</taxon>
        <taxon>Dictyostelia</taxon>
        <taxon>Dictyosteliales</taxon>
        <taxon>Dictyosteliaceae</taxon>
        <taxon>Dictyostelium</taxon>
    </lineage>
</organism>
<keyword id="KW-1185">Reference proteome</keyword>
<protein>
    <recommendedName>
        <fullName>Uncharacterized protein DDB_G0267542</fullName>
    </recommendedName>
</protein>
<dbReference type="EMBL" id="AAFI02000003">
    <property type="protein sequence ID" value="EAL73224.1"/>
    <property type="molecule type" value="Genomic_DNA"/>
</dbReference>
<dbReference type="RefSeq" id="XP_647113.1">
    <property type="nucleotide sequence ID" value="XM_642021.1"/>
</dbReference>
<dbReference type="SMR" id="Q55GS1"/>
<dbReference type="FunCoup" id="Q55GS1">
    <property type="interactions" value="877"/>
</dbReference>
<dbReference type="PaxDb" id="44689-DDB0189358"/>
<dbReference type="EnsemblProtists" id="EAL73224">
    <property type="protein sequence ID" value="EAL73224"/>
    <property type="gene ID" value="DDB_G0267542"/>
</dbReference>
<dbReference type="GeneID" id="8615917"/>
<dbReference type="KEGG" id="ddi:DDB_G0267542"/>
<dbReference type="dictyBase" id="DDB_G0267542"/>
<dbReference type="VEuPathDB" id="AmoebaDB:DDB_G0267542"/>
<dbReference type="HOGENOM" id="CLU_2676246_0_0_1"/>
<dbReference type="InParanoid" id="Q55GS1"/>
<dbReference type="PRO" id="PR:Q55GS1"/>
<dbReference type="Proteomes" id="UP000002195">
    <property type="component" value="Chromosome 1"/>
</dbReference>
<feature type="chain" id="PRO_0000348191" description="Uncharacterized protein DDB_G0267542">
    <location>
        <begin position="1"/>
        <end position="75"/>
    </location>
</feature>
<feature type="region of interest" description="Disordered" evidence="1">
    <location>
        <begin position="1"/>
        <end position="30"/>
    </location>
</feature>
<feature type="compositionally biased region" description="Low complexity" evidence="1">
    <location>
        <begin position="1"/>
        <end position="14"/>
    </location>
</feature>